<proteinExistence type="evidence at transcript level"/>
<reference key="1">
    <citation type="journal article" date="1993" name="Genomics">
        <title>DNA sequence and analysis of 136 kilobases of the Escherichia coli genome: organizational symmetry around the origin of replication.</title>
        <authorList>
            <person name="Burland V.D."/>
            <person name="Plunkett G. III"/>
            <person name="Daniels D.L."/>
            <person name="Blattner F.R."/>
        </authorList>
    </citation>
    <scope>NUCLEOTIDE SEQUENCE [LARGE SCALE GENOMIC DNA]</scope>
    <source>
        <strain>K12 / MG1655 / ATCC 47076</strain>
    </source>
</reference>
<reference key="2">
    <citation type="journal article" date="1997" name="Science">
        <title>The complete genome sequence of Escherichia coli K-12.</title>
        <authorList>
            <person name="Blattner F.R."/>
            <person name="Plunkett G. III"/>
            <person name="Bloch C.A."/>
            <person name="Perna N.T."/>
            <person name="Burland V."/>
            <person name="Riley M."/>
            <person name="Collado-Vides J."/>
            <person name="Glasner J.D."/>
            <person name="Rode C.K."/>
            <person name="Mayhew G.F."/>
            <person name="Gregor J."/>
            <person name="Davis N.W."/>
            <person name="Kirkpatrick H.A."/>
            <person name="Goeden M.A."/>
            <person name="Rose D.J."/>
            <person name="Mau B."/>
            <person name="Shao Y."/>
        </authorList>
    </citation>
    <scope>NUCLEOTIDE SEQUENCE [LARGE SCALE GENOMIC DNA]</scope>
    <source>
        <strain>K12 / MG1655 / ATCC 47076</strain>
    </source>
</reference>
<reference key="3">
    <citation type="journal article" date="2006" name="Mol. Syst. Biol.">
        <title>Highly accurate genome sequences of Escherichia coli K-12 strains MG1655 and W3110.</title>
        <authorList>
            <person name="Hayashi K."/>
            <person name="Morooka N."/>
            <person name="Yamamoto Y."/>
            <person name="Fujita K."/>
            <person name="Isono K."/>
            <person name="Choi S."/>
            <person name="Ohtsubo E."/>
            <person name="Baba T."/>
            <person name="Wanner B.L."/>
            <person name="Mori H."/>
            <person name="Horiuchi T."/>
        </authorList>
    </citation>
    <scope>NUCLEOTIDE SEQUENCE [LARGE SCALE GENOMIC DNA]</scope>
    <source>
        <strain>K12 / W3110 / ATCC 27325 / DSM 5911</strain>
    </source>
</reference>
<reference key="4">
    <citation type="journal article" date="2001" name="J. Biol. Chem.">
        <title>Escherichia coli CreBC is a global regulator of gene expression that responds to growth in minimal media.</title>
        <authorList>
            <person name="Avison M.B."/>
            <person name="Horton R.E."/>
            <person name="Walsh T.R."/>
            <person name="Bennett P.M."/>
        </authorList>
    </citation>
    <scope>INDUCTION BY CREBC</scope>
</reference>
<reference key="5">
    <citation type="journal article" date="2003" name="J. Bacteriol.">
        <title>Phenotype microarray analysis of Escherichia coli K-12 mutants with deletions of all two-component systems.</title>
        <authorList>
            <person name="Zhou L."/>
            <person name="Lei X.-H."/>
            <person name="Bochner B.R."/>
            <person name="Wanner B.L."/>
        </authorList>
    </citation>
    <scope>MUTANT STUDIES</scope>
</reference>
<feature type="chain" id="PRO_0000209365" description="UPF0167 protein CbrC">
    <location>
        <begin position="1"/>
        <end position="195"/>
    </location>
</feature>
<accession>P31469</accession>
<accession>Q2M835</accession>
<dbReference type="EMBL" id="L10328">
    <property type="protein sequence ID" value="AAA62068.1"/>
    <property type="molecule type" value="Genomic_DNA"/>
</dbReference>
<dbReference type="EMBL" id="U00096">
    <property type="protein sequence ID" value="AAC76740.1"/>
    <property type="molecule type" value="Genomic_DNA"/>
</dbReference>
<dbReference type="EMBL" id="AP009048">
    <property type="protein sequence ID" value="BAE77571.1"/>
    <property type="molecule type" value="Genomic_DNA"/>
</dbReference>
<dbReference type="PIR" id="F65174">
    <property type="entry name" value="F65174"/>
</dbReference>
<dbReference type="RefSeq" id="NP_418173.1">
    <property type="nucleotide sequence ID" value="NC_000913.3"/>
</dbReference>
<dbReference type="RefSeq" id="WP_000193072.1">
    <property type="nucleotide sequence ID" value="NZ_LN832404.1"/>
</dbReference>
<dbReference type="BioGRID" id="4263198">
    <property type="interactions" value="17"/>
</dbReference>
<dbReference type="FunCoup" id="P31469">
    <property type="interactions" value="45"/>
</dbReference>
<dbReference type="IntAct" id="P31469">
    <property type="interactions" value="14"/>
</dbReference>
<dbReference type="STRING" id="511145.b3717"/>
<dbReference type="PaxDb" id="511145-b3717"/>
<dbReference type="DNASU" id="948230"/>
<dbReference type="EnsemblBacteria" id="AAC76740">
    <property type="protein sequence ID" value="AAC76740"/>
    <property type="gene ID" value="b3717"/>
</dbReference>
<dbReference type="GeneID" id="948230"/>
<dbReference type="KEGG" id="ecj:JW3695"/>
<dbReference type="KEGG" id="eco:b3717"/>
<dbReference type="KEGG" id="ecoc:C3026_20150"/>
<dbReference type="PATRIC" id="fig|511145.12.peg.3840"/>
<dbReference type="EchoBASE" id="EB1678"/>
<dbReference type="eggNOG" id="COG3196">
    <property type="taxonomic scope" value="Bacteria"/>
</dbReference>
<dbReference type="HOGENOM" id="CLU_108448_0_0_6"/>
<dbReference type="InParanoid" id="P31469"/>
<dbReference type="OMA" id="PWCVADG"/>
<dbReference type="OrthoDB" id="7065534at2"/>
<dbReference type="PhylomeDB" id="P31469"/>
<dbReference type="BioCyc" id="EcoCyc:EG11727-MONOMER"/>
<dbReference type="PRO" id="PR:P31469"/>
<dbReference type="Proteomes" id="UP000000625">
    <property type="component" value="Chromosome"/>
</dbReference>
<dbReference type="GO" id="GO:0030153">
    <property type="term" value="P:bacteriocin immunity"/>
    <property type="evidence" value="ECO:0000315"/>
    <property type="project" value="EcoCyc"/>
</dbReference>
<dbReference type="InterPro" id="IPR005363">
    <property type="entry name" value="UPF0167"/>
</dbReference>
<dbReference type="InterPro" id="IPR054918">
    <property type="entry name" value="UPF0167_CbrC"/>
</dbReference>
<dbReference type="NCBIfam" id="NF040891">
    <property type="entry name" value="colicin_tol_CbrC"/>
    <property type="match status" value="1"/>
</dbReference>
<dbReference type="Pfam" id="PF03691">
    <property type="entry name" value="UPF0167"/>
    <property type="match status" value="1"/>
</dbReference>
<gene>
    <name type="primary">cbrC</name>
    <name type="synonym">yieJ</name>
    <name type="ordered locus">b3717</name>
    <name type="ordered locus">JW3695</name>
</gene>
<protein>
    <recommendedName>
        <fullName>UPF0167 protein CbrC</fullName>
    </recommendedName>
    <alternativeName>
        <fullName>CreB-regulated gene C protein</fullName>
    </alternativeName>
</protein>
<sequence>MTQNIRPLPQFKYHPKPLETGAFEQDKTVECDCCEQQTSVYYSGPFYCVDEVEHLCPWCIADGSAAEKFAGSFQDDASIEGVEFEYDEEDEFAGIKNTYPDEMLKELVERTPGYHGWQQEFWLAHCGDFCVFIGYVGWNDIKDRLDEFANLEEDCENFGIRNSDLAKCLQKGGHCQGYLFRCLHCGKLRLWGDFS</sequence>
<comment type="induction">
    <text evidence="1">Induced by the two-component regulatory system CreC/CreB.</text>
</comment>
<comment type="miscellaneous">
    <text>Disruption of this gene leads to hypersensibility to nitrofurazone.</text>
</comment>
<comment type="similarity">
    <text evidence="2">Belongs to the UPF0167 family.</text>
</comment>
<keyword id="KW-1185">Reference proteome</keyword>
<name>CBRC_ECOLI</name>
<evidence type="ECO:0000269" key="1">
    <source>
    </source>
</evidence>
<evidence type="ECO:0000305" key="2"/>
<organism>
    <name type="scientific">Escherichia coli (strain K12)</name>
    <dbReference type="NCBI Taxonomy" id="83333"/>
    <lineage>
        <taxon>Bacteria</taxon>
        <taxon>Pseudomonadati</taxon>
        <taxon>Pseudomonadota</taxon>
        <taxon>Gammaproteobacteria</taxon>
        <taxon>Enterobacterales</taxon>
        <taxon>Enterobacteriaceae</taxon>
        <taxon>Escherichia</taxon>
    </lineage>
</organism>